<organism>
    <name type="scientific">Branchiostoma lanceolatum</name>
    <name type="common">Common lancelet</name>
    <name type="synonym">Amphioxus lanceolatum</name>
    <dbReference type="NCBI Taxonomy" id="7740"/>
    <lineage>
        <taxon>Eukaryota</taxon>
        <taxon>Metazoa</taxon>
        <taxon>Chordata</taxon>
        <taxon>Cephalochordata</taxon>
        <taxon>Leptocardii</taxon>
        <taxon>Amphioxiformes</taxon>
        <taxon>Branchiostomatidae</taxon>
        <taxon>Branchiostoma</taxon>
    </lineage>
</organism>
<feature type="chain" id="PRO_0000073633" description="Sarcoplasmic calcium-binding proteins II, V, VI, and VII">
    <location>
        <begin position="1"/>
        <end position="185"/>
    </location>
</feature>
<feature type="domain" description="EF-hand 1" evidence="1">
    <location>
        <begin position="5"/>
        <end position="41"/>
    </location>
</feature>
<feature type="domain" description="EF-hand 2" evidence="1">
    <location>
        <begin position="57"/>
        <end position="92"/>
    </location>
</feature>
<feature type="domain" description="EF-hand 3" evidence="1">
    <location>
        <begin position="102"/>
        <end position="137"/>
    </location>
</feature>
<feature type="domain" description="EF-hand 4" evidence="1">
    <location>
        <begin position="138"/>
        <end position="173"/>
    </location>
</feature>
<feature type="binding site" evidence="1">
    <location>
        <position position="19"/>
    </location>
    <ligand>
        <name>Ca(2+)</name>
        <dbReference type="ChEBI" id="CHEBI:29108"/>
        <label>1</label>
    </ligand>
</feature>
<feature type="binding site" evidence="1">
    <location>
        <position position="21"/>
    </location>
    <ligand>
        <name>Ca(2+)</name>
        <dbReference type="ChEBI" id="CHEBI:29108"/>
        <label>1</label>
    </ligand>
</feature>
<feature type="binding site" evidence="1">
    <location>
        <position position="23"/>
    </location>
    <ligand>
        <name>Ca(2+)</name>
        <dbReference type="ChEBI" id="CHEBI:29108"/>
        <label>1</label>
    </ligand>
</feature>
<feature type="binding site" evidence="1">
    <location>
        <position position="25"/>
    </location>
    <ligand>
        <name>Ca(2+)</name>
        <dbReference type="ChEBI" id="CHEBI:29108"/>
        <label>1</label>
    </ligand>
</feature>
<feature type="binding site" evidence="1">
    <location>
        <position position="30"/>
    </location>
    <ligand>
        <name>Ca(2+)</name>
        <dbReference type="ChEBI" id="CHEBI:29108"/>
        <label>1</label>
    </ligand>
</feature>
<feature type="binding site" evidence="1">
    <location>
        <position position="70"/>
    </location>
    <ligand>
        <name>Ca(2+)</name>
        <dbReference type="ChEBI" id="CHEBI:29108"/>
        <label>2</label>
    </ligand>
</feature>
<feature type="binding site" evidence="1">
    <location>
        <position position="72"/>
    </location>
    <ligand>
        <name>Ca(2+)</name>
        <dbReference type="ChEBI" id="CHEBI:29108"/>
        <label>2</label>
    </ligand>
</feature>
<feature type="binding site" evidence="1">
    <location>
        <position position="74"/>
    </location>
    <ligand>
        <name>Ca(2+)</name>
        <dbReference type="ChEBI" id="CHEBI:29108"/>
        <label>2</label>
    </ligand>
</feature>
<feature type="binding site" evidence="1">
    <location>
        <position position="81"/>
    </location>
    <ligand>
        <name>Ca(2+)</name>
        <dbReference type="ChEBI" id="CHEBI:29108"/>
        <label>2</label>
    </ligand>
</feature>
<feature type="binding site" evidence="1">
    <location>
        <position position="115"/>
    </location>
    <ligand>
        <name>Ca(2+)</name>
        <dbReference type="ChEBI" id="CHEBI:29108"/>
        <label>3</label>
    </ligand>
</feature>
<feature type="binding site" evidence="1">
    <location>
        <position position="117"/>
    </location>
    <ligand>
        <name>Ca(2+)</name>
        <dbReference type="ChEBI" id="CHEBI:29108"/>
        <label>3</label>
    </ligand>
</feature>
<feature type="binding site" evidence="1">
    <location>
        <position position="119"/>
    </location>
    <ligand>
        <name>Ca(2+)</name>
        <dbReference type="ChEBI" id="CHEBI:29108"/>
        <label>3</label>
    </ligand>
</feature>
<feature type="binding site" evidence="1">
    <location>
        <position position="126"/>
    </location>
    <ligand>
        <name>Ca(2+)</name>
        <dbReference type="ChEBI" id="CHEBI:29108"/>
        <label>3</label>
    </ligand>
</feature>
<feature type="sequence variant" description="In SCP V.">
    <original>S</original>
    <variation>A</variation>
    <location>
        <position position="25"/>
    </location>
</feature>
<feature type="sequence variant" description="In SCP V, VI and VII.">
    <original>D</original>
    <variation>W</variation>
    <location>
        <position position="28"/>
    </location>
</feature>
<feature type="sequence variant" description="In SCP VI.">
    <original>N</original>
    <variation>E</variation>
    <location>
        <position position="29"/>
    </location>
</feature>
<feature type="helix" evidence="2">
    <location>
        <begin position="4"/>
        <end position="17"/>
    </location>
</feature>
<feature type="strand" evidence="2">
    <location>
        <begin position="23"/>
        <end position="26"/>
    </location>
</feature>
<feature type="helix" evidence="2">
    <location>
        <begin position="28"/>
        <end position="42"/>
    </location>
</feature>
<feature type="helix" evidence="2">
    <location>
        <begin position="43"/>
        <end position="45"/>
    </location>
</feature>
<feature type="helix" evidence="2">
    <location>
        <begin position="48"/>
        <end position="69"/>
    </location>
</feature>
<feature type="helix" evidence="2">
    <location>
        <begin position="79"/>
        <end position="91"/>
    </location>
</feature>
<feature type="helix" evidence="2">
    <location>
        <begin position="96"/>
        <end position="98"/>
    </location>
</feature>
<feature type="helix" evidence="2">
    <location>
        <begin position="103"/>
        <end position="114"/>
    </location>
</feature>
<feature type="strand" evidence="2">
    <location>
        <begin position="118"/>
        <end position="120"/>
    </location>
</feature>
<feature type="helix" evidence="2">
    <location>
        <begin position="124"/>
        <end position="130"/>
    </location>
</feature>
<feature type="helix" evidence="2">
    <location>
        <begin position="141"/>
        <end position="149"/>
    </location>
</feature>
<feature type="turn" evidence="2">
    <location>
        <begin position="150"/>
        <end position="153"/>
    </location>
</feature>
<feature type="helix" evidence="2">
    <location>
        <begin position="158"/>
        <end position="170"/>
    </location>
</feature>
<feature type="helix" evidence="2">
    <location>
        <begin position="176"/>
        <end position="181"/>
    </location>
</feature>
<keyword id="KW-0002">3D-structure</keyword>
<keyword id="KW-0106">Calcium</keyword>
<keyword id="KW-0903">Direct protein sequencing</keyword>
<keyword id="KW-0479">Metal-binding</keyword>
<keyword id="KW-0514">Muscle protein</keyword>
<keyword id="KW-0677">Repeat</keyword>
<reference key="1">
    <citation type="journal article" date="1986" name="Biochemistry">
        <title>Amino acid sequence of two sarcoplasmic calcium-binding proteins from the protochordate amphioxus.</title>
        <authorList>
            <person name="Takagi T."/>
            <person name="Konishi K."/>
            <person name="Cox J.A."/>
        </authorList>
    </citation>
    <scope>PROTEIN SEQUENCE</scope>
</reference>
<reference key="2">
    <citation type="journal article" date="1990" name="Eur. J. Biochem.">
        <title>Amino acid sequences of four isoforms of amphioxus sarcoplasmic calcium-binding proteins.</title>
        <authorList>
            <person name="Takagi T."/>
            <person name="Cox J.A."/>
        </authorList>
    </citation>
    <scope>SEQUENCE REVISION</scope>
</reference>
<reference key="3">
    <citation type="journal article" date="1992" name="FEBS Lett.">
        <title>Primary structure of three minor isoforms of amphioxus sarcoplasmic calcium-binding proteins.</title>
        <authorList>
            <person name="Takagi T."/>
            <person name="Valette-Talbi L."/>
            <person name="Cox J.A."/>
        </authorList>
    </citation>
    <scope>PROTEIN SEQUENCE (SCP V TO VII)</scope>
</reference>
<reference key="4">
    <citation type="journal article" date="1993" name="J. Mol. Biol.">
        <title>Structure of a sarcoplasmic calcium-binding protein from amphioxus refined at 2.4-A resolution.</title>
        <authorList>
            <person name="Cook W.J."/>
            <person name="Jeffrey L.C."/>
            <person name="Cox J.A."/>
            <person name="Vijay-Kumar S."/>
        </authorList>
    </citation>
    <scope>X-RAY CRYSTALLOGRAPHY (2.4 ANGSTROMS)</scope>
</reference>
<name>SCP2_BRALA</name>
<evidence type="ECO:0000255" key="1">
    <source>
        <dbReference type="PROSITE-ProRule" id="PRU00448"/>
    </source>
</evidence>
<evidence type="ECO:0007829" key="2">
    <source>
        <dbReference type="PDB" id="2SAS"/>
    </source>
</evidence>
<sequence>GLNDFQKQKIKFTFDFFLDMNHDGSIQDNDFEDMMTRYKEVNKGSLSDADYKSMQASLEDEWRDLKGRADINKDDVVSWEEYLAMWEKTIATCKSVADLPAWCQNRIPFLFKGMDVSGDGIVDLEEFQNYCKNFQLQCADVPAVYNVITDGGKVTFDLNRYKELYYRLLTSPAADAGNTLMGQKP</sequence>
<dbReference type="PIR" id="S13183">
    <property type="entry name" value="S13183"/>
</dbReference>
<dbReference type="PIR" id="S21153">
    <property type="entry name" value="S21153"/>
</dbReference>
<dbReference type="PDB" id="2SAS">
    <property type="method" value="X-ray"/>
    <property type="resolution" value="2.40 A"/>
    <property type="chains" value="A=1-185"/>
</dbReference>
<dbReference type="PDBsum" id="2SAS"/>
<dbReference type="SMR" id="P04570"/>
<dbReference type="EvolutionaryTrace" id="P04570"/>
<dbReference type="GO" id="GO:0005509">
    <property type="term" value="F:calcium ion binding"/>
    <property type="evidence" value="ECO:0007669"/>
    <property type="project" value="InterPro"/>
</dbReference>
<dbReference type="Gene3D" id="1.10.238.10">
    <property type="entry name" value="EF-hand"/>
    <property type="match status" value="1"/>
</dbReference>
<dbReference type="InterPro" id="IPR011992">
    <property type="entry name" value="EF-hand-dom_pair"/>
</dbReference>
<dbReference type="InterPro" id="IPR018247">
    <property type="entry name" value="EF_Hand_1_Ca_BS"/>
</dbReference>
<dbReference type="InterPro" id="IPR002048">
    <property type="entry name" value="EF_hand_dom"/>
</dbReference>
<dbReference type="SUPFAM" id="SSF47473">
    <property type="entry name" value="EF-hand"/>
    <property type="match status" value="1"/>
</dbReference>
<dbReference type="PROSITE" id="PS00018">
    <property type="entry name" value="EF_HAND_1"/>
    <property type="match status" value="3"/>
</dbReference>
<dbReference type="PROSITE" id="PS50222">
    <property type="entry name" value="EF_HAND_2"/>
    <property type="match status" value="3"/>
</dbReference>
<comment type="function">
    <text>Like parvalbumins, SCPs seem to be more abundant in fast contracting muscles, but no functional relationship can be established from this distribution.</text>
</comment>
<comment type="miscellaneous">
    <text>The sarcoplasmic calcium-binding proteins are abundant in the muscle of arthropods, mollusks, annelids, and protochordates.</text>
</comment>
<comment type="miscellaneous">
    <text>This protein has three functional calcium-binding sites; potential site 4 has lost affinity for calcium.</text>
</comment>
<comment type="miscellaneous">
    <text>There are 7 different SCP's in amphioxus. The sequence shown here is that of SCP II.</text>
</comment>
<accession>P04570</accession>
<protein>
    <recommendedName>
        <fullName>Sarcoplasmic calcium-binding proteins II, V, VI, and VII</fullName>
        <shortName>SCP II</shortName>
        <shortName>SCP V</shortName>
        <shortName>SCP VI</shortName>
        <shortName>SCP VII</shortName>
    </recommendedName>
</protein>
<proteinExistence type="evidence at protein level"/>